<accession>Q1ZXD6</accession>
<accession>Q6XHB1</accession>
<organism>
    <name type="scientific">Dictyostelium discoideum</name>
    <name type="common">Social amoeba</name>
    <dbReference type="NCBI Taxonomy" id="44689"/>
    <lineage>
        <taxon>Eukaryota</taxon>
        <taxon>Amoebozoa</taxon>
        <taxon>Evosea</taxon>
        <taxon>Eumycetozoa</taxon>
        <taxon>Dictyostelia</taxon>
        <taxon>Dictyosteliales</taxon>
        <taxon>Dictyosteliaceae</taxon>
        <taxon>Dictyostelium</taxon>
    </lineage>
</organism>
<reference key="1">
    <citation type="journal article" date="2003" name="Biochim. Biophys. Acta">
        <title>Roc, a Ras/GTPase domain in complex proteins.</title>
        <authorList>
            <person name="Bosgraaf L."/>
            <person name="van Haastert P.J.M."/>
        </authorList>
    </citation>
    <scope>NUCLEOTIDE SEQUENCE [GENOMIC DNA]</scope>
</reference>
<reference key="2">
    <citation type="journal article" date="2005" name="Nature">
        <title>The genome of the social amoeba Dictyostelium discoideum.</title>
        <authorList>
            <person name="Eichinger L."/>
            <person name="Pachebat J.A."/>
            <person name="Gloeckner G."/>
            <person name="Rajandream M.A."/>
            <person name="Sucgang R."/>
            <person name="Berriman M."/>
            <person name="Song J."/>
            <person name="Olsen R."/>
            <person name="Szafranski K."/>
            <person name="Xu Q."/>
            <person name="Tunggal B."/>
            <person name="Kummerfeld S."/>
            <person name="Madera M."/>
            <person name="Konfortov B.A."/>
            <person name="Rivero F."/>
            <person name="Bankier A.T."/>
            <person name="Lehmann R."/>
            <person name="Hamlin N."/>
            <person name="Davies R."/>
            <person name="Gaudet P."/>
            <person name="Fey P."/>
            <person name="Pilcher K."/>
            <person name="Chen G."/>
            <person name="Saunders D."/>
            <person name="Sodergren E.J."/>
            <person name="Davis P."/>
            <person name="Kerhornou A."/>
            <person name="Nie X."/>
            <person name="Hall N."/>
            <person name="Anjard C."/>
            <person name="Hemphill L."/>
            <person name="Bason N."/>
            <person name="Farbrother P."/>
            <person name="Desany B."/>
            <person name="Just E."/>
            <person name="Morio T."/>
            <person name="Rost R."/>
            <person name="Churcher C.M."/>
            <person name="Cooper J."/>
            <person name="Haydock S."/>
            <person name="van Driessche N."/>
            <person name="Cronin A."/>
            <person name="Goodhead I."/>
            <person name="Muzny D.M."/>
            <person name="Mourier T."/>
            <person name="Pain A."/>
            <person name="Lu M."/>
            <person name="Harper D."/>
            <person name="Lindsay R."/>
            <person name="Hauser H."/>
            <person name="James K.D."/>
            <person name="Quiles M."/>
            <person name="Madan Babu M."/>
            <person name="Saito T."/>
            <person name="Buchrieser C."/>
            <person name="Wardroper A."/>
            <person name="Felder M."/>
            <person name="Thangavelu M."/>
            <person name="Johnson D."/>
            <person name="Knights A."/>
            <person name="Loulseged H."/>
            <person name="Mungall K.L."/>
            <person name="Oliver K."/>
            <person name="Price C."/>
            <person name="Quail M.A."/>
            <person name="Urushihara H."/>
            <person name="Hernandez J."/>
            <person name="Rabbinowitsch E."/>
            <person name="Steffen D."/>
            <person name="Sanders M."/>
            <person name="Ma J."/>
            <person name="Kohara Y."/>
            <person name="Sharp S."/>
            <person name="Simmonds M.N."/>
            <person name="Spiegler S."/>
            <person name="Tivey A."/>
            <person name="Sugano S."/>
            <person name="White B."/>
            <person name="Walker D."/>
            <person name="Woodward J.R."/>
            <person name="Winckler T."/>
            <person name="Tanaka Y."/>
            <person name="Shaulsky G."/>
            <person name="Schleicher M."/>
            <person name="Weinstock G.M."/>
            <person name="Rosenthal A."/>
            <person name="Cox E.C."/>
            <person name="Chisholm R.L."/>
            <person name="Gibbs R.A."/>
            <person name="Loomis W.F."/>
            <person name="Platzer M."/>
            <person name="Kay R.R."/>
            <person name="Williams J.G."/>
            <person name="Dear P.H."/>
            <person name="Noegel A.A."/>
            <person name="Barrell B.G."/>
            <person name="Kuspa A."/>
        </authorList>
    </citation>
    <scope>NUCLEOTIDE SEQUENCE [LARGE SCALE GENOMIC DNA]</scope>
    <source>
        <strain>AX4</strain>
    </source>
</reference>
<gene>
    <name type="primary">roco5</name>
    <name type="ORF">DDB_G0294533</name>
</gene>
<keyword id="KW-0067">ATP-binding</keyword>
<keyword id="KW-0342">GTP-binding</keyword>
<keyword id="KW-0344">Guanine-nucleotide releasing factor</keyword>
<keyword id="KW-0418">Kinase</keyword>
<keyword id="KW-0433">Leucine-rich repeat</keyword>
<keyword id="KW-0547">Nucleotide-binding</keyword>
<keyword id="KW-1185">Reference proteome</keyword>
<keyword id="KW-0677">Repeat</keyword>
<keyword id="KW-0723">Serine/threonine-protein kinase</keyword>
<keyword id="KW-0808">Transferase</keyword>
<evidence type="ECO:0000250" key="1"/>
<evidence type="ECO:0000255" key="2"/>
<evidence type="ECO:0000255" key="3">
    <source>
        <dbReference type="PROSITE-ProRule" id="PRU00062"/>
    </source>
</evidence>
<evidence type="ECO:0000255" key="4">
    <source>
        <dbReference type="PROSITE-ProRule" id="PRU00145"/>
    </source>
</evidence>
<evidence type="ECO:0000255" key="5">
    <source>
        <dbReference type="PROSITE-ProRule" id="PRU00159"/>
    </source>
</evidence>
<evidence type="ECO:0000255" key="6">
    <source>
        <dbReference type="PROSITE-ProRule" id="PRU00758"/>
    </source>
</evidence>
<evidence type="ECO:0000255" key="7">
    <source>
        <dbReference type="PROSITE-ProRule" id="PRU10027"/>
    </source>
</evidence>
<evidence type="ECO:0000256" key="8">
    <source>
        <dbReference type="SAM" id="MobiDB-lite"/>
    </source>
</evidence>
<evidence type="ECO:0000305" key="9"/>
<dbReference type="EC" id="2.7.11.1"/>
<dbReference type="EMBL" id="AY232267">
    <property type="protein sequence ID" value="AAO83650.1"/>
    <property type="molecule type" value="Genomic_DNA"/>
</dbReference>
<dbReference type="EMBL" id="AAFI02000111">
    <property type="protein sequence ID" value="EAS66840.1"/>
    <property type="molecule type" value="Genomic_DNA"/>
</dbReference>
<dbReference type="RefSeq" id="XP_001134523.1">
    <property type="nucleotide sequence ID" value="XM_001134523.1"/>
</dbReference>
<dbReference type="FunCoup" id="Q1ZXD6">
    <property type="interactions" value="610"/>
</dbReference>
<dbReference type="STRING" id="44689.Q1ZXD6"/>
<dbReference type="GlyGen" id="Q1ZXD6">
    <property type="glycosylation" value="5 sites"/>
</dbReference>
<dbReference type="PaxDb" id="44689-DDB0232931"/>
<dbReference type="EnsemblProtists" id="EAS66840">
    <property type="protein sequence ID" value="EAS66840"/>
    <property type="gene ID" value="DDB_G0294533"/>
</dbReference>
<dbReference type="GeneID" id="8626589"/>
<dbReference type="KEGG" id="ddi:DDB_G0294533"/>
<dbReference type="dictyBase" id="DDB_G0294533">
    <property type="gene designation" value="roco5"/>
</dbReference>
<dbReference type="VEuPathDB" id="AmoebaDB:DDB_G0294533"/>
<dbReference type="eggNOG" id="KOG0192">
    <property type="taxonomic scope" value="Eukaryota"/>
</dbReference>
<dbReference type="eggNOG" id="KOG0619">
    <property type="taxonomic scope" value="Eukaryota"/>
</dbReference>
<dbReference type="HOGENOM" id="CLU_226859_0_0_1"/>
<dbReference type="InParanoid" id="Q1ZXD6"/>
<dbReference type="OMA" id="EREMNTP"/>
<dbReference type="Reactome" id="R-DDI-5675482">
    <property type="pathway name" value="Regulation of necroptotic cell death"/>
</dbReference>
<dbReference type="PRO" id="PR:Q1ZXD6"/>
<dbReference type="Proteomes" id="UP000002195">
    <property type="component" value="Chromosome 5"/>
</dbReference>
<dbReference type="GO" id="GO:0005737">
    <property type="term" value="C:cytoplasm"/>
    <property type="evidence" value="ECO:0000318"/>
    <property type="project" value="GO_Central"/>
</dbReference>
<dbReference type="GO" id="GO:0005829">
    <property type="term" value="C:cytosol"/>
    <property type="evidence" value="ECO:0000304"/>
    <property type="project" value="dictyBase"/>
</dbReference>
<dbReference type="GO" id="GO:0005524">
    <property type="term" value="F:ATP binding"/>
    <property type="evidence" value="ECO:0007669"/>
    <property type="project" value="UniProtKB-KW"/>
</dbReference>
<dbReference type="GO" id="GO:0005525">
    <property type="term" value="F:GTP binding"/>
    <property type="evidence" value="ECO:0007669"/>
    <property type="project" value="UniProtKB-KW"/>
</dbReference>
<dbReference type="GO" id="GO:0005085">
    <property type="term" value="F:guanyl-nucleotide exchange factor activity"/>
    <property type="evidence" value="ECO:0007669"/>
    <property type="project" value="UniProtKB-KW"/>
</dbReference>
<dbReference type="GO" id="GO:0004672">
    <property type="term" value="F:protein kinase activity"/>
    <property type="evidence" value="ECO:0000318"/>
    <property type="project" value="GO_Central"/>
</dbReference>
<dbReference type="GO" id="GO:0106310">
    <property type="term" value="F:protein serine kinase activity"/>
    <property type="evidence" value="ECO:0007669"/>
    <property type="project" value="RHEA"/>
</dbReference>
<dbReference type="GO" id="GO:0004674">
    <property type="term" value="F:protein serine/threonine kinase activity"/>
    <property type="evidence" value="ECO:0007669"/>
    <property type="project" value="UniProtKB-KW"/>
</dbReference>
<dbReference type="GO" id="GO:0007165">
    <property type="term" value="P:signal transduction"/>
    <property type="evidence" value="ECO:0000318"/>
    <property type="project" value="GO_Central"/>
</dbReference>
<dbReference type="GO" id="GO:0030587">
    <property type="term" value="P:sorocarp development"/>
    <property type="evidence" value="ECO:0007001"/>
    <property type="project" value="dictyBase"/>
</dbReference>
<dbReference type="CDD" id="cd09914">
    <property type="entry name" value="RocCOR"/>
    <property type="match status" value="1"/>
</dbReference>
<dbReference type="CDD" id="cd13999">
    <property type="entry name" value="STKc_MAP3K-like"/>
    <property type="match status" value="1"/>
</dbReference>
<dbReference type="Gene3D" id="3.30.310.200">
    <property type="match status" value="1"/>
</dbReference>
<dbReference type="Gene3D" id="1.20.900.10">
    <property type="entry name" value="Dbl homology (DH) domain"/>
    <property type="match status" value="1"/>
</dbReference>
<dbReference type="Gene3D" id="3.40.50.300">
    <property type="entry name" value="P-loop containing nucleotide triphosphate hydrolases"/>
    <property type="match status" value="1"/>
</dbReference>
<dbReference type="Gene3D" id="3.30.200.20">
    <property type="entry name" value="Phosphorylase Kinase, domain 1"/>
    <property type="match status" value="1"/>
</dbReference>
<dbReference type="Gene3D" id="2.30.29.30">
    <property type="entry name" value="Pleckstrin-homology domain (PH domain)/Phosphotyrosine-binding domain (PTB)"/>
    <property type="match status" value="1"/>
</dbReference>
<dbReference type="Gene3D" id="3.80.10.10">
    <property type="entry name" value="Ribonuclease Inhibitor"/>
    <property type="match status" value="3"/>
</dbReference>
<dbReference type="Gene3D" id="3.30.70.1390">
    <property type="entry name" value="ROC domain from the Parkinson's disease-associated leucine-rich repeat kinase 2"/>
    <property type="match status" value="1"/>
</dbReference>
<dbReference type="Gene3D" id="1.10.510.10">
    <property type="entry name" value="Transferase(Phosphotransferase) domain 1"/>
    <property type="match status" value="1"/>
</dbReference>
<dbReference type="Gene3D" id="1.10.10.10">
    <property type="entry name" value="Winged helix-like DNA-binding domain superfamily/Winged helix DNA-binding domain"/>
    <property type="match status" value="1"/>
</dbReference>
<dbReference type="InterPro" id="IPR032171">
    <property type="entry name" value="COR-A"/>
</dbReference>
<dbReference type="InterPro" id="IPR035899">
    <property type="entry name" value="DBL_dom_sf"/>
</dbReference>
<dbReference type="InterPro" id="IPR000219">
    <property type="entry name" value="DH_dom"/>
</dbReference>
<dbReference type="InterPro" id="IPR011009">
    <property type="entry name" value="Kinase-like_dom_sf"/>
</dbReference>
<dbReference type="InterPro" id="IPR001611">
    <property type="entry name" value="Leu-rich_rpt"/>
</dbReference>
<dbReference type="InterPro" id="IPR003591">
    <property type="entry name" value="Leu-rich_rpt_typical-subtyp"/>
</dbReference>
<dbReference type="InterPro" id="IPR032675">
    <property type="entry name" value="LRR_dom_sf"/>
</dbReference>
<dbReference type="InterPro" id="IPR027417">
    <property type="entry name" value="P-loop_NTPase"/>
</dbReference>
<dbReference type="InterPro" id="IPR011993">
    <property type="entry name" value="PH-like_dom_sf"/>
</dbReference>
<dbReference type="InterPro" id="IPR001849">
    <property type="entry name" value="PH_domain"/>
</dbReference>
<dbReference type="InterPro" id="IPR000719">
    <property type="entry name" value="Prot_kinase_dom"/>
</dbReference>
<dbReference type="InterPro" id="IPR017441">
    <property type="entry name" value="Protein_kinase_ATP_BS"/>
</dbReference>
<dbReference type="InterPro" id="IPR020859">
    <property type="entry name" value="ROC"/>
</dbReference>
<dbReference type="InterPro" id="IPR001245">
    <property type="entry name" value="Ser-Thr/Tyr_kinase_cat_dom"/>
</dbReference>
<dbReference type="InterPro" id="IPR008271">
    <property type="entry name" value="Ser/Thr_kinase_AS"/>
</dbReference>
<dbReference type="InterPro" id="IPR051420">
    <property type="entry name" value="Ser_Thr_Kinases_DiverseReg"/>
</dbReference>
<dbReference type="InterPro" id="IPR036388">
    <property type="entry name" value="WH-like_DNA-bd_sf"/>
</dbReference>
<dbReference type="PANTHER" id="PTHR48005">
    <property type="entry name" value="LEUCINE RICH REPEAT KINASE 2"/>
    <property type="match status" value="1"/>
</dbReference>
<dbReference type="PANTHER" id="PTHR48005:SF13">
    <property type="entry name" value="SERINE_THREONINE-PROTEIN KINASE DDB_G0278509-RELATED"/>
    <property type="match status" value="1"/>
</dbReference>
<dbReference type="Pfam" id="PF16095">
    <property type="entry name" value="COR-A"/>
    <property type="match status" value="1"/>
</dbReference>
<dbReference type="Pfam" id="PF25497">
    <property type="entry name" value="COR-B"/>
    <property type="match status" value="1"/>
</dbReference>
<dbReference type="Pfam" id="PF13516">
    <property type="entry name" value="LRR_6"/>
    <property type="match status" value="2"/>
</dbReference>
<dbReference type="Pfam" id="PF13855">
    <property type="entry name" value="LRR_8"/>
    <property type="match status" value="2"/>
</dbReference>
<dbReference type="Pfam" id="PF07714">
    <property type="entry name" value="PK_Tyr_Ser-Thr"/>
    <property type="match status" value="1"/>
</dbReference>
<dbReference type="Pfam" id="PF00621">
    <property type="entry name" value="RhoGEF"/>
    <property type="match status" value="1"/>
</dbReference>
<dbReference type="Pfam" id="PF08477">
    <property type="entry name" value="Roc"/>
    <property type="match status" value="1"/>
</dbReference>
<dbReference type="PRINTS" id="PR00019">
    <property type="entry name" value="LEURICHRPT"/>
</dbReference>
<dbReference type="PRINTS" id="PR00449">
    <property type="entry name" value="RASTRNSFRMNG"/>
</dbReference>
<dbReference type="SMART" id="SM00364">
    <property type="entry name" value="LRR_BAC"/>
    <property type="match status" value="4"/>
</dbReference>
<dbReference type="SMART" id="SM00368">
    <property type="entry name" value="LRR_RI"/>
    <property type="match status" value="5"/>
</dbReference>
<dbReference type="SMART" id="SM00369">
    <property type="entry name" value="LRR_TYP"/>
    <property type="match status" value="7"/>
</dbReference>
<dbReference type="SMART" id="SM00233">
    <property type="entry name" value="PH"/>
    <property type="match status" value="1"/>
</dbReference>
<dbReference type="SMART" id="SM00220">
    <property type="entry name" value="S_TKc"/>
    <property type="match status" value="1"/>
</dbReference>
<dbReference type="SUPFAM" id="SSF48065">
    <property type="entry name" value="DBL homology domain (DH-domain)"/>
    <property type="match status" value="1"/>
</dbReference>
<dbReference type="SUPFAM" id="SSF52058">
    <property type="entry name" value="L domain-like"/>
    <property type="match status" value="1"/>
</dbReference>
<dbReference type="SUPFAM" id="SSF52540">
    <property type="entry name" value="P-loop containing nucleoside triphosphate hydrolases"/>
    <property type="match status" value="1"/>
</dbReference>
<dbReference type="SUPFAM" id="SSF50729">
    <property type="entry name" value="PH domain-like"/>
    <property type="match status" value="1"/>
</dbReference>
<dbReference type="SUPFAM" id="SSF56112">
    <property type="entry name" value="Protein kinase-like (PK-like)"/>
    <property type="match status" value="1"/>
</dbReference>
<dbReference type="SUPFAM" id="SSF52047">
    <property type="entry name" value="RNI-like"/>
    <property type="match status" value="1"/>
</dbReference>
<dbReference type="PROSITE" id="PS50010">
    <property type="entry name" value="DH_2"/>
    <property type="match status" value="1"/>
</dbReference>
<dbReference type="PROSITE" id="PS51450">
    <property type="entry name" value="LRR"/>
    <property type="match status" value="11"/>
</dbReference>
<dbReference type="PROSITE" id="PS50003">
    <property type="entry name" value="PH_DOMAIN"/>
    <property type="match status" value="1"/>
</dbReference>
<dbReference type="PROSITE" id="PS00107">
    <property type="entry name" value="PROTEIN_KINASE_ATP"/>
    <property type="match status" value="1"/>
</dbReference>
<dbReference type="PROSITE" id="PS50011">
    <property type="entry name" value="PROTEIN_KINASE_DOM"/>
    <property type="match status" value="1"/>
</dbReference>
<dbReference type="PROSITE" id="PS00108">
    <property type="entry name" value="PROTEIN_KINASE_ST"/>
    <property type="match status" value="1"/>
</dbReference>
<dbReference type="PROSITE" id="PS51424">
    <property type="entry name" value="ROC"/>
    <property type="match status" value="1"/>
</dbReference>
<name>ROCO5_DICDI</name>
<proteinExistence type="inferred from homology"/>
<feature type="chain" id="PRO_0000355210" description="Probable serine/threonine-protein kinase roco5">
    <location>
        <begin position="1"/>
        <end position="2800"/>
    </location>
</feature>
<feature type="domain" description="DH" evidence="3">
    <location>
        <begin position="227"/>
        <end position="508"/>
    </location>
</feature>
<feature type="domain" description="PH" evidence="4">
    <location>
        <begin position="540"/>
        <end position="649"/>
    </location>
</feature>
<feature type="repeat" description="LRR 1">
    <location>
        <begin position="777"/>
        <end position="800"/>
    </location>
</feature>
<feature type="repeat" description="LRR 2">
    <location>
        <begin position="805"/>
        <end position="832"/>
    </location>
</feature>
<feature type="repeat" description="LRR 3">
    <location>
        <begin position="834"/>
        <end position="856"/>
    </location>
</feature>
<feature type="repeat" description="LRR 4">
    <location>
        <begin position="861"/>
        <end position="885"/>
    </location>
</feature>
<feature type="repeat" description="LRR 5">
    <location>
        <begin position="971"/>
        <end position="984"/>
    </location>
</feature>
<feature type="repeat" description="LRR 6">
    <location>
        <begin position="985"/>
        <end position="1007"/>
    </location>
</feature>
<feature type="repeat" description="LRR 7">
    <location>
        <begin position="1008"/>
        <end position="1031"/>
    </location>
</feature>
<feature type="repeat" description="LRR 8">
    <location>
        <begin position="1033"/>
        <end position="1056"/>
    </location>
</feature>
<feature type="repeat" description="LRR 9">
    <location>
        <begin position="1058"/>
        <end position="1077"/>
    </location>
</feature>
<feature type="repeat" description="LRR 10">
    <location>
        <begin position="1078"/>
        <end position="1101"/>
    </location>
</feature>
<feature type="repeat" description="LRR 11">
    <location>
        <begin position="1128"/>
        <end position="1151"/>
    </location>
</feature>
<feature type="repeat" description="LRR 12">
    <location>
        <begin position="1152"/>
        <end position="1174"/>
    </location>
</feature>
<feature type="repeat" description="LRR 13">
    <location>
        <begin position="1175"/>
        <end position="1197"/>
    </location>
</feature>
<feature type="repeat" description="LRR 14">
    <location>
        <begin position="1199"/>
        <end position="1222"/>
    </location>
</feature>
<feature type="domain" description="Roc" evidence="6">
    <location>
        <begin position="1244"/>
        <end position="1464"/>
    </location>
</feature>
<feature type="domain" description="COR 1" evidence="2">
    <location>
        <begin position="1473"/>
        <end position="1604"/>
    </location>
</feature>
<feature type="domain" description="COR 2" evidence="2">
    <location>
        <begin position="1717"/>
        <end position="1790"/>
    </location>
</feature>
<feature type="domain" description="Protein kinase" evidence="5">
    <location>
        <begin position="2175"/>
        <end position="2440"/>
    </location>
</feature>
<feature type="region of interest" description="Disordered" evidence="8">
    <location>
        <begin position="1"/>
        <end position="92"/>
    </location>
</feature>
<feature type="region of interest" description="Disordered" evidence="8">
    <location>
        <begin position="123"/>
        <end position="225"/>
    </location>
</feature>
<feature type="region of interest" description="Disordered" evidence="8">
    <location>
        <begin position="417"/>
        <end position="437"/>
    </location>
</feature>
<feature type="region of interest" description="Disordered" evidence="8">
    <location>
        <begin position="926"/>
        <end position="946"/>
    </location>
</feature>
<feature type="region of interest" description="Disordered" evidence="8">
    <location>
        <begin position="1605"/>
        <end position="1665"/>
    </location>
</feature>
<feature type="region of interest" description="Disordered" evidence="8">
    <location>
        <begin position="1688"/>
        <end position="1711"/>
    </location>
</feature>
<feature type="region of interest" description="Disordered" evidence="8">
    <location>
        <begin position="1886"/>
        <end position="2011"/>
    </location>
</feature>
<feature type="region of interest" description="Disordered" evidence="8">
    <location>
        <begin position="2050"/>
        <end position="2070"/>
    </location>
</feature>
<feature type="region of interest" description="Disordered" evidence="8">
    <location>
        <begin position="2452"/>
        <end position="2498"/>
    </location>
</feature>
<feature type="region of interest" description="Disordered" evidence="8">
    <location>
        <begin position="2544"/>
        <end position="2800"/>
    </location>
</feature>
<feature type="compositionally biased region" description="Basic and acidic residues" evidence="8">
    <location>
        <begin position="1"/>
        <end position="61"/>
    </location>
</feature>
<feature type="compositionally biased region" description="Pro residues" evidence="8">
    <location>
        <begin position="77"/>
        <end position="86"/>
    </location>
</feature>
<feature type="compositionally biased region" description="Low complexity" evidence="8">
    <location>
        <begin position="123"/>
        <end position="134"/>
    </location>
</feature>
<feature type="compositionally biased region" description="Low complexity" evidence="8">
    <location>
        <begin position="143"/>
        <end position="170"/>
    </location>
</feature>
<feature type="compositionally biased region" description="Polar residues" evidence="8">
    <location>
        <begin position="176"/>
        <end position="190"/>
    </location>
</feature>
<feature type="compositionally biased region" description="Basic and acidic residues" evidence="8">
    <location>
        <begin position="194"/>
        <end position="218"/>
    </location>
</feature>
<feature type="compositionally biased region" description="Low complexity" evidence="8">
    <location>
        <begin position="417"/>
        <end position="429"/>
    </location>
</feature>
<feature type="compositionally biased region" description="Low complexity" evidence="8">
    <location>
        <begin position="934"/>
        <end position="946"/>
    </location>
</feature>
<feature type="compositionally biased region" description="Low complexity" evidence="8">
    <location>
        <begin position="1610"/>
        <end position="1645"/>
    </location>
</feature>
<feature type="compositionally biased region" description="Low complexity" evidence="8">
    <location>
        <begin position="1653"/>
        <end position="1665"/>
    </location>
</feature>
<feature type="compositionally biased region" description="Low complexity" evidence="8">
    <location>
        <begin position="1688"/>
        <end position="1707"/>
    </location>
</feature>
<feature type="compositionally biased region" description="Low complexity" evidence="8">
    <location>
        <begin position="1886"/>
        <end position="2008"/>
    </location>
</feature>
<feature type="compositionally biased region" description="Polar residues" evidence="8">
    <location>
        <begin position="2050"/>
        <end position="2059"/>
    </location>
</feature>
<feature type="compositionally biased region" description="Low complexity" evidence="8">
    <location>
        <begin position="2452"/>
        <end position="2490"/>
    </location>
</feature>
<feature type="compositionally biased region" description="Low complexity" evidence="8">
    <location>
        <begin position="2583"/>
        <end position="2654"/>
    </location>
</feature>
<feature type="compositionally biased region" description="Low complexity" evidence="8">
    <location>
        <begin position="2669"/>
        <end position="2685"/>
    </location>
</feature>
<feature type="compositionally biased region" description="Low complexity" evidence="8">
    <location>
        <begin position="2694"/>
        <end position="2704"/>
    </location>
</feature>
<feature type="compositionally biased region" description="Pro residues" evidence="8">
    <location>
        <begin position="2705"/>
        <end position="2723"/>
    </location>
</feature>
<feature type="compositionally biased region" description="Polar residues" evidence="8">
    <location>
        <begin position="2730"/>
        <end position="2756"/>
    </location>
</feature>
<feature type="compositionally biased region" description="Low complexity" evidence="8">
    <location>
        <begin position="2757"/>
        <end position="2787"/>
    </location>
</feature>
<feature type="active site" description="Proton acceptor" evidence="5 7">
    <location>
        <position position="2300"/>
    </location>
</feature>
<feature type="binding site" evidence="6">
    <location>
        <begin position="1257"/>
        <end position="1264"/>
    </location>
    <ligand>
        <name>GTP</name>
        <dbReference type="ChEBI" id="CHEBI:37565"/>
    </ligand>
</feature>
<feature type="binding site" evidence="6">
    <location>
        <begin position="1348"/>
        <end position="1352"/>
    </location>
    <ligand>
        <name>GTP</name>
        <dbReference type="ChEBI" id="CHEBI:37565"/>
    </ligand>
</feature>
<feature type="binding site" evidence="6">
    <location>
        <begin position="1407"/>
        <end position="1410"/>
    </location>
    <ligand>
        <name>GTP</name>
        <dbReference type="ChEBI" id="CHEBI:37565"/>
    </ligand>
</feature>
<feature type="binding site" evidence="5">
    <location>
        <begin position="2181"/>
        <end position="2189"/>
    </location>
    <ligand>
        <name>ATP</name>
        <dbReference type="ChEBI" id="CHEBI:30616"/>
    </ligand>
</feature>
<feature type="binding site" evidence="5">
    <location>
        <position position="2202"/>
    </location>
    <ligand>
        <name>ATP</name>
        <dbReference type="ChEBI" id="CHEBI:30616"/>
    </ligand>
</feature>
<feature type="sequence conflict" description="In Ref. 1; AAO83650." evidence="9" ref="1">
    <original>MS</original>
    <variation>SQ</variation>
    <location>
        <begin position="1885"/>
        <end position="1886"/>
    </location>
</feature>
<feature type="sequence conflict" description="In Ref. 1; AAO83650." evidence="9" ref="1">
    <original>HH</original>
    <variation>QQ</variation>
    <location>
        <begin position="1890"/>
        <end position="1891"/>
    </location>
</feature>
<protein>
    <recommendedName>
        <fullName>Probable serine/threonine-protein kinase roco5</fullName>
        <ecNumber>2.7.11.1</ecNumber>
    </recommendedName>
    <alternativeName>
        <fullName>Ras of complex proteins and C-terminal of roc 5</fullName>
    </alternativeName>
</protein>
<comment type="function">
    <text evidence="1">May act as a serine/threonine-protein kinase and guanine-nucleotide releasing factor.</text>
</comment>
<comment type="catalytic activity">
    <reaction>
        <text>L-seryl-[protein] + ATP = O-phospho-L-seryl-[protein] + ADP + H(+)</text>
        <dbReference type="Rhea" id="RHEA:17989"/>
        <dbReference type="Rhea" id="RHEA-COMP:9863"/>
        <dbReference type="Rhea" id="RHEA-COMP:11604"/>
        <dbReference type="ChEBI" id="CHEBI:15378"/>
        <dbReference type="ChEBI" id="CHEBI:29999"/>
        <dbReference type="ChEBI" id="CHEBI:30616"/>
        <dbReference type="ChEBI" id="CHEBI:83421"/>
        <dbReference type="ChEBI" id="CHEBI:456216"/>
        <dbReference type="EC" id="2.7.11.1"/>
    </reaction>
</comment>
<comment type="catalytic activity">
    <reaction>
        <text>L-threonyl-[protein] + ATP = O-phospho-L-threonyl-[protein] + ADP + H(+)</text>
        <dbReference type="Rhea" id="RHEA:46608"/>
        <dbReference type="Rhea" id="RHEA-COMP:11060"/>
        <dbReference type="Rhea" id="RHEA-COMP:11605"/>
        <dbReference type="ChEBI" id="CHEBI:15378"/>
        <dbReference type="ChEBI" id="CHEBI:30013"/>
        <dbReference type="ChEBI" id="CHEBI:30616"/>
        <dbReference type="ChEBI" id="CHEBI:61977"/>
        <dbReference type="ChEBI" id="CHEBI:456216"/>
        <dbReference type="EC" id="2.7.11.1"/>
    </reaction>
</comment>
<comment type="similarity">
    <text evidence="9">Belongs to the protein kinase superfamily. TKL Ser/Thr protein kinase family. ROCO subfamily.</text>
</comment>
<sequence>MEVIKKEKKDKEKKDKEEKKDKEKKDKSEKKEKKDKEKKEKEKKEKKEKEKEKEKDKEKDGGLFSIVGGWVGNLTEPTPPPPPPPSSVSAQSTAEANAILLNPTTQENHKKAMDFWVTNTSTTTTTTTTTSSNNIPSLVSVQNNNTSNNNINNNNKTSNTTGSNVSSSNNKETVKINVTSLDSGGNNNASGKDISNEHSPKNRKEKEKEKDKDNKEDSINESPVDENRRKLVEGFMKSLQGCSDAIKVILDVFYQPLKKADLLSQEELKAIFSLIESISSFQQTILIDFKKYISNWNSTTQAQLHSTFLQFVGYLKLYKVYGLQYNYSLSSLCLLMFDNQRFESFINNAESKLVNEHKYSLAPLVPTSSSSSCVKPVSLSEILGSQYDQTTSQSTNNSSGSSFPAVTLRRTGHTFTGINSANSNNNNNNSGGGSSGINNSNSVTGKFTQEYTYSNLASLLILPIHFLARFHQFFKSLIDSIAVLNPDYKPYNNLYKQIVQVVKDIVNESVNINKVISISKSIKSPTIGLFNSSDIVQNRKFLKEGILIEQFNNQRISYYTFLFSDIILFTEKIEDTSTINNNTMMAYDGSFYLLKKLERIVNIQVDDPELGFEYRKGFQIKTKESSIFYMTSSEKEKSTWFQVLSQASLKSNQNQNQNQNNLTNSYSSTVAGGRNSTIGLGGIDDFNNNNNGNNNGSNNDDGPDEFEDAKDIALFCKMIISGQRPKVELTSQMLKISDPKPLFAALASTHFVNQLIFIPLTMNDKYMQMTLGMMSLNKSITHLTLSQNSINDPCAVALGDMLRYNHSLIQMDLSENTIADKGLISLIDGILSHPSITVVILTQNQITDTGAKHISKLLKFNQTLNALFLEDNNITQSMGAEIIDQWVSCHSTVLSRITLPSIPPEYSDRIKLKAISVTNRLDKKKKQLQVNQKSTTPSTSTSTTSSTIINNNKGLLDLGSCDYSEISLQLLNKLNMLSLDSRRISDLKELYLDHNCISSIPVSILKELKNLQILDLSNNQLSSLPSEISEMKELKLLNVSHNNLSSLPIELGTLCKLNHLDISFNFIETINVNSLSQLVNLKVLMMQRNYFNRLPIEIFTRLKSLESFSIAGSPCFHPIKQRIYEAIAIKATKLDLSDCGLSALPIEIGSISSLIELDLTNNRIKDLPPQIGKLSSLQTLNLSNNAIESLPWQLSQLTTLKVLNITGNPISFDGASNAKISIPDVLSGDDLIGILKYLKLASTKEKPCMRMKLMLVGQENVGKTSIAKCLKKEIIPVGKKLRQTIGLGTKKSKTPTLTEANGSIDFNAPQSINPLNTSLNISTDGINMDDWRPPSEDQSPPVTFSIWDFAGQEVYYSTHQFFISSRSVFIVVFDMSVYNPDETSRVPYWLQCIEAFGGNSPVILVGTHLDDLPNGVDVNQITQDIHSKYFTKFPNVKFFLPVSCKSGKNINKLQNHIVKLGKAEKKLGDLFSRSYFQLENLILSEREMNTPPIITLSEFTEMAISCGIPQTSITAAADFLKELGVIVYFDDPKSGLDQFIFIDPPWLTRLMATIITSKPNFVQSGVLDQSNLHQIWKPPDFPQHLHHVLLAILQKFEIVHPLPDPKATISSSSSSPSTTQKSLNNSGSNLKSSGSAISTSSSSTTNGNKTLHRTNSTTNTTSLLNVSRFGNGSISKGSSLSIIKKINDQSTSPSNSTTPSPNTSSNNFSDSITLVPKSSTKHLVPILLSEERPNSIEKLYDQILLKSQQQQPFLERIYQFEFLPIGFFSKLMIRTMHFTTVKEFWKNGLLVEKDDSQCLIESIQQFNQINFKAWGKNPASLLRFIIETAEVLISGWYKLHFHFLVPCNCINCNSILISNIGSINIINSTINLSSNNNNNVNIVNMSQQQHHQQQQSPSTSTSSSSSLTSSQPSLSTPLTSSQPSLSTSQPQLSTTTTTTATTTTSSSSQSLASQQSSSQIQLTHSSSLSSMSGSISTNSLNSNVSSSSSTPSLLSPPLLNPDSTSSSNETSGDILDLDFADYYDGESVSPGGTLKGKRKKNPSKFLTLYRNTNKPKINGTTGSGSSSSIVTTAVSSSSSSSSSTSLSNTSSRQLDLSKISHLINQQLSFGPSKTQDLRTMFLYEEIERIFLSKKFEVVCRSSITGEETIVRLDSLVPELMMSDIGPNFTLEYKDLEIIEKVGEGGFGIVYKGKLRGQLVAIKQITIDSGQAEAASEIYREFRREVWLSNTLTHPSIVSLKGYCLDPCCIVMEYIPNGTLYSHLRKSFSSITWQLKLKIAINIADAIKHMHGFTPKICHRDLKSPNILMLSDMNAAVVCKVSDFGETRAVVTSALGRDKLSNPIWLSPEIMRGDEYTEKADVYSFGIVLWEILTGLLPFDEYPVAHSSFMYQLEDEITNGLRPTIPQNSVCGHPDFITLITDCWQNDPLKRPTFIDIHSRLLIMSGLNPATATTTNSAKSTISTGFNSNSGATTTTKPKSSTISSGSGTTSPPQPHPQLVRKLTQNFTPIATSPTPSVIVSSVPTTTTTTTTSVATTPTVQTILAGGNITPKPSVPTAMKPNITPKPTLISSQKPPAPNPVPILKTPTPTNLSPTSISTPTTPTTPTTPTTPTTPTNSTSSNLKPTPTSKSNPSSPPQIATTATATQTPTPSPISVLKPPRSLPQKPVGTTQTTSTPPTNQTPNPTIVTRPPLPSSLSSNSINKPPSKPLPTPGGVTSPPPPPTTSSTTPIKFNSISAGNKTIGQSSTLPSSTLKQFTANNNTSPSGSSSLPNSTVSSPSSSFLLRPTGGTISKKLPAIPK</sequence>